<keyword id="KW-0007">Acetylation</keyword>
<keyword id="KW-0963">Cytoplasm</keyword>
<keyword id="KW-0312">Gluconeogenesis</keyword>
<keyword id="KW-0324">Glycolysis</keyword>
<keyword id="KW-0413">Isomerase</keyword>
<keyword id="KW-1185">Reference proteome</keyword>
<protein>
    <recommendedName>
        <fullName evidence="1">Glucose-6-phosphate isomerase</fullName>
        <shortName evidence="1">GPI</shortName>
        <ecNumber evidence="1">5.3.1.9</ecNumber>
    </recommendedName>
    <alternativeName>
        <fullName evidence="1">Phosphoglucose isomerase</fullName>
        <shortName evidence="1">PGI</shortName>
    </alternativeName>
    <alternativeName>
        <fullName evidence="1">Phosphohexose isomerase</fullName>
        <shortName evidence="1">PHI</shortName>
    </alternativeName>
</protein>
<reference key="1">
    <citation type="journal article" date="2009" name="J. Bacteriol.">
        <title>Complete genome sequence and comparative genome analysis of enteropathogenic Escherichia coli O127:H6 strain E2348/69.</title>
        <authorList>
            <person name="Iguchi A."/>
            <person name="Thomson N.R."/>
            <person name="Ogura Y."/>
            <person name="Saunders D."/>
            <person name="Ooka T."/>
            <person name="Henderson I.R."/>
            <person name="Harris D."/>
            <person name="Asadulghani M."/>
            <person name="Kurokawa K."/>
            <person name="Dean P."/>
            <person name="Kenny B."/>
            <person name="Quail M.A."/>
            <person name="Thurston S."/>
            <person name="Dougan G."/>
            <person name="Hayashi T."/>
            <person name="Parkhill J."/>
            <person name="Frankel G."/>
        </authorList>
    </citation>
    <scope>NUCLEOTIDE SEQUENCE [LARGE SCALE GENOMIC DNA]</scope>
    <source>
        <strain>E2348/69 / EPEC</strain>
    </source>
</reference>
<proteinExistence type="inferred from homology"/>
<gene>
    <name evidence="1" type="primary">pgi</name>
    <name type="ordered locus">E2348C_4340</name>
</gene>
<evidence type="ECO:0000255" key="1">
    <source>
        <dbReference type="HAMAP-Rule" id="MF_00473"/>
    </source>
</evidence>
<comment type="function">
    <text evidence="1">Catalyzes the reversible isomerization of glucose-6-phosphate to fructose-6-phosphate.</text>
</comment>
<comment type="catalytic activity">
    <reaction evidence="1">
        <text>alpha-D-glucose 6-phosphate = beta-D-fructose 6-phosphate</text>
        <dbReference type="Rhea" id="RHEA:11816"/>
        <dbReference type="ChEBI" id="CHEBI:57634"/>
        <dbReference type="ChEBI" id="CHEBI:58225"/>
        <dbReference type="EC" id="5.3.1.9"/>
    </reaction>
</comment>
<comment type="pathway">
    <text evidence="1">Carbohydrate biosynthesis; gluconeogenesis.</text>
</comment>
<comment type="pathway">
    <text evidence="1">Carbohydrate degradation; glycolysis; D-glyceraldehyde 3-phosphate and glycerone phosphate from D-glucose: step 2/4.</text>
</comment>
<comment type="subcellular location">
    <subcellularLocation>
        <location evidence="1">Cytoplasm</location>
    </subcellularLocation>
</comment>
<comment type="similarity">
    <text evidence="1">Belongs to the GPI family.</text>
</comment>
<name>G6PI_ECO27</name>
<accession>B7UPI6</accession>
<organism>
    <name type="scientific">Escherichia coli O127:H6 (strain E2348/69 / EPEC)</name>
    <dbReference type="NCBI Taxonomy" id="574521"/>
    <lineage>
        <taxon>Bacteria</taxon>
        <taxon>Pseudomonadati</taxon>
        <taxon>Pseudomonadota</taxon>
        <taxon>Gammaproteobacteria</taxon>
        <taxon>Enterobacterales</taxon>
        <taxon>Enterobacteriaceae</taxon>
        <taxon>Escherichia</taxon>
    </lineage>
</organism>
<dbReference type="EC" id="5.3.1.9" evidence="1"/>
<dbReference type="EMBL" id="FM180568">
    <property type="protein sequence ID" value="CAS11888.1"/>
    <property type="molecule type" value="Genomic_DNA"/>
</dbReference>
<dbReference type="RefSeq" id="WP_000789981.1">
    <property type="nucleotide sequence ID" value="NC_011601.1"/>
</dbReference>
<dbReference type="SMR" id="B7UPI6"/>
<dbReference type="KEGG" id="ecg:E2348C_4340"/>
<dbReference type="HOGENOM" id="CLU_017947_3_1_6"/>
<dbReference type="UniPathway" id="UPA00109">
    <property type="reaction ID" value="UER00181"/>
</dbReference>
<dbReference type="UniPathway" id="UPA00138"/>
<dbReference type="Proteomes" id="UP000008205">
    <property type="component" value="Chromosome"/>
</dbReference>
<dbReference type="GO" id="GO:0005829">
    <property type="term" value="C:cytosol"/>
    <property type="evidence" value="ECO:0007669"/>
    <property type="project" value="TreeGrafter"/>
</dbReference>
<dbReference type="GO" id="GO:0097367">
    <property type="term" value="F:carbohydrate derivative binding"/>
    <property type="evidence" value="ECO:0007669"/>
    <property type="project" value="InterPro"/>
</dbReference>
<dbReference type="GO" id="GO:0004347">
    <property type="term" value="F:glucose-6-phosphate isomerase activity"/>
    <property type="evidence" value="ECO:0007669"/>
    <property type="project" value="UniProtKB-UniRule"/>
</dbReference>
<dbReference type="GO" id="GO:0048029">
    <property type="term" value="F:monosaccharide binding"/>
    <property type="evidence" value="ECO:0007669"/>
    <property type="project" value="TreeGrafter"/>
</dbReference>
<dbReference type="GO" id="GO:0006094">
    <property type="term" value="P:gluconeogenesis"/>
    <property type="evidence" value="ECO:0007669"/>
    <property type="project" value="UniProtKB-UniRule"/>
</dbReference>
<dbReference type="GO" id="GO:0051156">
    <property type="term" value="P:glucose 6-phosphate metabolic process"/>
    <property type="evidence" value="ECO:0007669"/>
    <property type="project" value="TreeGrafter"/>
</dbReference>
<dbReference type="GO" id="GO:0006096">
    <property type="term" value="P:glycolytic process"/>
    <property type="evidence" value="ECO:0007669"/>
    <property type="project" value="UniProtKB-UniRule"/>
</dbReference>
<dbReference type="CDD" id="cd05015">
    <property type="entry name" value="SIS_PGI_1"/>
    <property type="match status" value="1"/>
</dbReference>
<dbReference type="CDD" id="cd05016">
    <property type="entry name" value="SIS_PGI_2"/>
    <property type="match status" value="1"/>
</dbReference>
<dbReference type="FunFam" id="1.10.1390.10:FF:000001">
    <property type="entry name" value="Glucose-6-phosphate isomerase"/>
    <property type="match status" value="1"/>
</dbReference>
<dbReference type="FunFam" id="3.40.50.10490:FF:000004">
    <property type="entry name" value="Glucose-6-phosphate isomerase"/>
    <property type="match status" value="1"/>
</dbReference>
<dbReference type="Gene3D" id="1.10.1390.10">
    <property type="match status" value="1"/>
</dbReference>
<dbReference type="Gene3D" id="3.40.50.10490">
    <property type="entry name" value="Glucose-6-phosphate isomerase like protein, domain 1"/>
    <property type="match status" value="2"/>
</dbReference>
<dbReference type="HAMAP" id="MF_00473">
    <property type="entry name" value="G6P_isomerase"/>
    <property type="match status" value="1"/>
</dbReference>
<dbReference type="InterPro" id="IPR001672">
    <property type="entry name" value="G6P_Isomerase"/>
</dbReference>
<dbReference type="InterPro" id="IPR023096">
    <property type="entry name" value="G6P_Isomerase_C"/>
</dbReference>
<dbReference type="InterPro" id="IPR018189">
    <property type="entry name" value="Phosphoglucose_isomerase_CS"/>
</dbReference>
<dbReference type="InterPro" id="IPR046348">
    <property type="entry name" value="SIS_dom_sf"/>
</dbReference>
<dbReference type="InterPro" id="IPR035476">
    <property type="entry name" value="SIS_PGI_1"/>
</dbReference>
<dbReference type="InterPro" id="IPR035482">
    <property type="entry name" value="SIS_PGI_2"/>
</dbReference>
<dbReference type="NCBIfam" id="NF001211">
    <property type="entry name" value="PRK00179.1"/>
    <property type="match status" value="1"/>
</dbReference>
<dbReference type="PANTHER" id="PTHR11469">
    <property type="entry name" value="GLUCOSE-6-PHOSPHATE ISOMERASE"/>
    <property type="match status" value="1"/>
</dbReference>
<dbReference type="PANTHER" id="PTHR11469:SF1">
    <property type="entry name" value="GLUCOSE-6-PHOSPHATE ISOMERASE"/>
    <property type="match status" value="1"/>
</dbReference>
<dbReference type="Pfam" id="PF00342">
    <property type="entry name" value="PGI"/>
    <property type="match status" value="1"/>
</dbReference>
<dbReference type="PRINTS" id="PR00662">
    <property type="entry name" value="G6PISOMERASE"/>
</dbReference>
<dbReference type="SUPFAM" id="SSF53697">
    <property type="entry name" value="SIS domain"/>
    <property type="match status" value="1"/>
</dbReference>
<dbReference type="PROSITE" id="PS00765">
    <property type="entry name" value="P_GLUCOSE_ISOMERASE_1"/>
    <property type="match status" value="1"/>
</dbReference>
<dbReference type="PROSITE" id="PS00174">
    <property type="entry name" value="P_GLUCOSE_ISOMERASE_2"/>
    <property type="match status" value="1"/>
</dbReference>
<dbReference type="PROSITE" id="PS51463">
    <property type="entry name" value="P_GLUCOSE_ISOMERASE_3"/>
    <property type="match status" value="1"/>
</dbReference>
<sequence length="549" mass="61544">MKNINPTQTAAWQALQKHFDEMKDVTIADLFAKDGDRFSKFSATFDDQMLVDYSKNRITEETLAKLQDLAKECDLAGAIKSMFSGEKINRTENRAVLHVALRNRSNTPILVDGKDVMPEVNAVLEKMKTFSEAIISGEWKGYTGKAITDVVNIGIGGSDLGPYMVTEALRPYKNHLNMHFVSNVDGTHIAEVLKKVNPETTLFLVASKTFTTQETMTNAHSARDWFLKAAGDEKHVAKHFAALSTNAKAVGEFGIDTANMFEFWDWVGGRYSLWSAIGLSIVLSIGFDNFVELLSGAHAMDKHFSTTPAEKNLPVLLALIGIWYNNFFGAETEAILPYDQYMHRFAAYFQQGNMESNGKYVDRNGKVVDYQTGPIIWGEPGTNGQHAFYQLIHQGTKMVPCDFIAPAITHNPLSDHHQKLLSNFFAQTEALAFGKSREVVEQEYRDQGKDPATLDYVVPFKVFEGNRPTNSILLREITPFSLGALIALYEHKIFTQGVILNIFTFDQWGVELGKQLANRILPELKDDKEISSHDSSTNGLINRYKAWRG</sequence>
<feature type="chain" id="PRO_1000135527" description="Glucose-6-phosphate isomerase">
    <location>
        <begin position="1"/>
        <end position="549"/>
    </location>
</feature>
<feature type="active site" description="Proton donor" evidence="1">
    <location>
        <position position="355"/>
    </location>
</feature>
<feature type="active site" evidence="1">
    <location>
        <position position="386"/>
    </location>
</feature>
<feature type="active site" evidence="1">
    <location>
        <position position="514"/>
    </location>
</feature>
<feature type="modified residue" description="N6-acetyllysine" evidence="1">
    <location>
        <position position="80"/>
    </location>
</feature>
<feature type="modified residue" description="N6-acetyllysine" evidence="1">
    <location>
        <position position="228"/>
    </location>
</feature>
<feature type="modified residue" description="N6-acetyllysine" evidence="1">
    <location>
        <position position="234"/>
    </location>
</feature>